<reference key="1">
    <citation type="submission" date="2007-04" db="EMBL/GenBank/DDBJ databases">
        <title>Cloning and sequence analysis of follistatin gene in buffalo.</title>
        <authorList>
            <person name="Deng J.X."/>
            <person name="Jiang H.S."/>
            <person name="Yang X.R."/>
        </authorList>
    </citation>
    <scope>NUCLEOTIDE SEQUENCE [MRNA]</scope>
</reference>
<comment type="function">
    <text evidence="1">Binds directly to activin and functions as an activin antagonist. Specific inhibitor of the biosynthesis and secretion of pituitary follicle stimulating hormone (FSH) (By similarity).</text>
</comment>
<comment type="subunit">
    <text evidence="9">Monomer.</text>
</comment>
<comment type="subcellular location">
    <subcellularLocation>
        <location evidence="1">Secreted</location>
    </subcellularLocation>
</comment>
<feature type="signal peptide" evidence="4">
    <location>
        <begin position="1"/>
        <end position="29"/>
    </location>
</feature>
<feature type="chain" id="PRO_0000318091" description="Follistatin">
    <location>
        <begin position="30"/>
        <end position="344"/>
    </location>
</feature>
<feature type="domain" description="TB" evidence="5">
    <location>
        <begin position="30"/>
        <end position="103"/>
    </location>
</feature>
<feature type="domain" description="Follistatin-like 1">
    <location>
        <begin position="94"/>
        <end position="117"/>
    </location>
</feature>
<feature type="domain" description="Kazal-like 1" evidence="6">
    <location>
        <begin position="112"/>
        <end position="166"/>
    </location>
</feature>
<feature type="domain" description="Follistatin-like 2">
    <location>
        <begin position="167"/>
        <end position="190"/>
    </location>
</feature>
<feature type="domain" description="Kazal-like 2" evidence="6">
    <location>
        <begin position="186"/>
        <end position="241"/>
    </location>
</feature>
<feature type="domain" description="Follistatin-like 3">
    <location>
        <begin position="244"/>
        <end position="268"/>
    </location>
</feature>
<feature type="domain" description="Kazal-like 3" evidence="6">
    <location>
        <begin position="261"/>
        <end position="318"/>
    </location>
</feature>
<feature type="region of interest" description="Disordered" evidence="7">
    <location>
        <begin position="316"/>
        <end position="344"/>
    </location>
</feature>
<feature type="compositionally biased region" description="Acidic residues" evidence="7">
    <location>
        <begin position="321"/>
        <end position="333"/>
    </location>
</feature>
<feature type="glycosylation site" description="N-linked (GlcNAc...) asparagine" evidence="4">
    <location>
        <position position="124"/>
    </location>
</feature>
<feature type="glycosylation site" description="N-linked (GlcNAc...) asparagine" evidence="4">
    <location>
        <position position="288"/>
    </location>
</feature>
<feature type="disulfide bond" evidence="2 5">
    <location>
        <begin position="32"/>
        <end position="55"/>
    </location>
</feature>
<feature type="disulfide bond" evidence="2 5">
    <location>
        <begin position="42"/>
        <end position="88"/>
    </location>
</feature>
<feature type="disulfide bond" evidence="2 5">
    <location>
        <begin position="56"/>
        <end position="91"/>
    </location>
</feature>
<feature type="disulfide bond" evidence="2">
    <location>
        <begin position="95"/>
        <end position="106"/>
    </location>
</feature>
<feature type="disulfide bond" evidence="2">
    <location>
        <begin position="100"/>
        <end position="116"/>
    </location>
</feature>
<feature type="disulfide bond" evidence="2">
    <location>
        <begin position="118"/>
        <end position="150"/>
    </location>
</feature>
<feature type="disulfide bond" evidence="2">
    <location>
        <begin position="122"/>
        <end position="143"/>
    </location>
</feature>
<feature type="disulfide bond" evidence="2">
    <location>
        <begin position="132"/>
        <end position="164"/>
    </location>
</feature>
<feature type="disulfide bond" evidence="2">
    <location>
        <begin position="168"/>
        <end position="179"/>
    </location>
</feature>
<feature type="disulfide bond" evidence="2">
    <location>
        <begin position="173"/>
        <end position="189"/>
    </location>
</feature>
<feature type="disulfide bond" evidence="2">
    <location>
        <begin position="192"/>
        <end position="225"/>
    </location>
</feature>
<feature type="disulfide bond" evidence="2">
    <location>
        <begin position="196"/>
        <end position="218"/>
    </location>
</feature>
<feature type="disulfide bond" evidence="2">
    <location>
        <begin position="207"/>
        <end position="239"/>
    </location>
</feature>
<feature type="disulfide bond" evidence="2">
    <location>
        <begin position="245"/>
        <end position="256"/>
    </location>
</feature>
<feature type="disulfide bond" evidence="2">
    <location>
        <begin position="250"/>
        <end position="267"/>
    </location>
</feature>
<feature type="disulfide bond" evidence="2">
    <location>
        <begin position="270"/>
        <end position="302"/>
    </location>
</feature>
<feature type="disulfide bond" evidence="2">
    <location>
        <begin position="274"/>
        <end position="295"/>
    </location>
</feature>
<feature type="disulfide bond" evidence="2">
    <location>
        <begin position="284"/>
        <end position="316"/>
    </location>
</feature>
<organism>
    <name type="scientific">Bubalus bubalis</name>
    <name type="common">Domestic water buffalo</name>
    <dbReference type="NCBI Taxonomy" id="89462"/>
    <lineage>
        <taxon>Eukaryota</taxon>
        <taxon>Metazoa</taxon>
        <taxon>Chordata</taxon>
        <taxon>Craniata</taxon>
        <taxon>Vertebrata</taxon>
        <taxon>Euteleostomi</taxon>
        <taxon>Mammalia</taxon>
        <taxon>Eutheria</taxon>
        <taxon>Laurasiatheria</taxon>
        <taxon>Artiodactyla</taxon>
        <taxon>Ruminantia</taxon>
        <taxon>Pecora</taxon>
        <taxon>Bovidae</taxon>
        <taxon>Bovinae</taxon>
        <taxon>Bubalus</taxon>
    </lineage>
</organism>
<proteinExistence type="evidence at transcript level"/>
<dbReference type="EMBL" id="EF585672">
    <property type="protein sequence ID" value="ABQ96267.1"/>
    <property type="molecule type" value="mRNA"/>
</dbReference>
<dbReference type="SMR" id="A5YT95"/>
<dbReference type="GlyCosmos" id="A5YT95">
    <property type="glycosylation" value="2 sites, No reported glycans"/>
</dbReference>
<dbReference type="GO" id="GO:0005576">
    <property type="term" value="C:extracellular region"/>
    <property type="evidence" value="ECO:0007669"/>
    <property type="project" value="UniProtKB-SubCell"/>
</dbReference>
<dbReference type="GO" id="GO:0030154">
    <property type="term" value="P:cell differentiation"/>
    <property type="evidence" value="ECO:0007669"/>
    <property type="project" value="TreeGrafter"/>
</dbReference>
<dbReference type="CDD" id="cd00104">
    <property type="entry name" value="KAZAL_FS"/>
    <property type="match status" value="2"/>
</dbReference>
<dbReference type="FunFam" id="3.30.60.30:FF:000005">
    <property type="entry name" value="Follistatin a"/>
    <property type="match status" value="1"/>
</dbReference>
<dbReference type="FunFam" id="3.30.60.30:FF:000006">
    <property type="entry name" value="Follistatin a"/>
    <property type="match status" value="1"/>
</dbReference>
<dbReference type="FunFam" id="3.30.60.30:FF:000009">
    <property type="entry name" value="Follistatin a"/>
    <property type="match status" value="1"/>
</dbReference>
<dbReference type="FunFam" id="3.90.290.10:FF:000013">
    <property type="entry name" value="Follistatin a"/>
    <property type="match status" value="1"/>
</dbReference>
<dbReference type="Gene3D" id="3.30.60.30">
    <property type="match status" value="3"/>
</dbReference>
<dbReference type="Gene3D" id="3.90.290.10">
    <property type="entry name" value="TGF-beta binding (TB) domain"/>
    <property type="match status" value="1"/>
</dbReference>
<dbReference type="InterPro" id="IPR003645">
    <property type="entry name" value="Fol_N"/>
</dbReference>
<dbReference type="InterPro" id="IPR015369">
    <property type="entry name" value="Follistatin/Osteonectin_EGF"/>
</dbReference>
<dbReference type="InterPro" id="IPR002350">
    <property type="entry name" value="Kazal_dom"/>
</dbReference>
<dbReference type="InterPro" id="IPR036058">
    <property type="entry name" value="Kazal_dom_sf"/>
</dbReference>
<dbReference type="InterPro" id="IPR050653">
    <property type="entry name" value="Prot_Inhib_GrowthFact_Antg"/>
</dbReference>
<dbReference type="InterPro" id="IPR017878">
    <property type="entry name" value="TB_dom"/>
</dbReference>
<dbReference type="InterPro" id="IPR036773">
    <property type="entry name" value="TB_dom_sf"/>
</dbReference>
<dbReference type="PANTHER" id="PTHR10913:SF45">
    <property type="entry name" value="FOLLISTATIN, ISOFORM A-RELATED"/>
    <property type="match status" value="1"/>
</dbReference>
<dbReference type="PANTHER" id="PTHR10913">
    <property type="entry name" value="FOLLISTATIN-RELATED"/>
    <property type="match status" value="1"/>
</dbReference>
<dbReference type="Pfam" id="PF09289">
    <property type="entry name" value="FOLN"/>
    <property type="match status" value="1"/>
</dbReference>
<dbReference type="Pfam" id="PF21333">
    <property type="entry name" value="FST_N"/>
    <property type="match status" value="1"/>
</dbReference>
<dbReference type="Pfam" id="PF07648">
    <property type="entry name" value="Kazal_2"/>
    <property type="match status" value="3"/>
</dbReference>
<dbReference type="SMART" id="SM00274">
    <property type="entry name" value="FOLN"/>
    <property type="match status" value="3"/>
</dbReference>
<dbReference type="SMART" id="SM00280">
    <property type="entry name" value="KAZAL"/>
    <property type="match status" value="3"/>
</dbReference>
<dbReference type="SUPFAM" id="SSF100895">
    <property type="entry name" value="Kazal-type serine protease inhibitors"/>
    <property type="match status" value="3"/>
</dbReference>
<dbReference type="SUPFAM" id="SSF57581">
    <property type="entry name" value="TB module/8-cys domain"/>
    <property type="match status" value="1"/>
</dbReference>
<dbReference type="PROSITE" id="PS51465">
    <property type="entry name" value="KAZAL_2"/>
    <property type="match status" value="3"/>
</dbReference>
<dbReference type="PROSITE" id="PS51364">
    <property type="entry name" value="TB"/>
    <property type="match status" value="1"/>
</dbReference>
<sequence length="344" mass="37974">MARPRHQPGGLCLLLLLLCQFMEDRSAQAGNCWLRQAKNGRCQVLYKTELSKEECCSTGRLSTSWTEEDVNDNTLFKWMIFNGGAPNCIPCKETCENVDCGPGKKCRMNKKNKPRCVCAPDCSNITWKGLVCGLDGKTYRNECALLKARCKEQPELQVQYQGKCKKTCRDVFCPGSSTCVVDQTNNAYCVTCNRICPEPTSSEQYLCGNDGVTYPSACHLRKATCLLGRSIGLAYEGKCIKAKSCDDIQCTGGKKCLWDFKVGRGRCSLCGELCPESKSEEPVCASDNATYASECAMKEAACSSGVLLEVKHSGSCNSISEDTEDEEEDEDQDYSFPISSILEW</sequence>
<name>FST_BUBBU</name>
<accession>A5YT95</accession>
<gene>
    <name evidence="2" type="primary">FST</name>
</gene>
<protein>
    <recommendedName>
        <fullName evidence="8">Follistatin</fullName>
        <shortName>FS</shortName>
    </recommendedName>
    <alternativeName>
        <fullName evidence="3">Activin-binding protein</fullName>
    </alternativeName>
</protein>
<keyword id="KW-1015">Disulfide bond</keyword>
<keyword id="KW-0325">Glycoprotein</keyword>
<keyword id="KW-0677">Repeat</keyword>
<keyword id="KW-0964">Secreted</keyword>
<keyword id="KW-0732">Signal</keyword>
<evidence type="ECO:0000250" key="1"/>
<evidence type="ECO:0000250" key="2">
    <source>
        <dbReference type="UniProtKB" id="P19883"/>
    </source>
</evidence>
<evidence type="ECO:0000250" key="3">
    <source>
        <dbReference type="UniProtKB" id="P21674"/>
    </source>
</evidence>
<evidence type="ECO:0000255" key="4"/>
<evidence type="ECO:0000255" key="5">
    <source>
        <dbReference type="PROSITE-ProRule" id="PRU00697"/>
    </source>
</evidence>
<evidence type="ECO:0000255" key="6">
    <source>
        <dbReference type="PROSITE-ProRule" id="PRU00798"/>
    </source>
</evidence>
<evidence type="ECO:0000256" key="7">
    <source>
        <dbReference type="SAM" id="MobiDB-lite"/>
    </source>
</evidence>
<evidence type="ECO:0000303" key="8">
    <source ref="1"/>
</evidence>
<evidence type="ECO:0000305" key="9"/>